<comment type="function">
    <text evidence="1">This protein binds specifically to 23S rRNA; its binding is stimulated by other ribosomal proteins, e.g. L4, L17, and L20. It is important during the early stages of 50S assembly. It makes multiple contacts with different domains of the 23S rRNA in the assembled 50S subunit and ribosome (By similarity).</text>
</comment>
<comment type="function">
    <text evidence="1">The globular domain of the protein is located near the polypeptide exit tunnel on the outside of the subunit, while an extended beta-hairpin is found that lines the wall of the exit tunnel in the center of the 70S ribosome.</text>
</comment>
<comment type="subunit">
    <text evidence="1">Part of the 50S ribosomal subunit.</text>
</comment>
<comment type="similarity">
    <text evidence="1">Belongs to the universal ribosomal protein uL22 family.</text>
</comment>
<dbReference type="EMBL" id="CP000922">
    <property type="protein sequence ID" value="ACJ32494.1"/>
    <property type="molecule type" value="Genomic_DNA"/>
</dbReference>
<dbReference type="RefSeq" id="WP_006322652.1">
    <property type="nucleotide sequence ID" value="NC_011567.1"/>
</dbReference>
<dbReference type="SMR" id="B7GJ72"/>
<dbReference type="STRING" id="491915.Aflv_0110"/>
<dbReference type="GeneID" id="7036309"/>
<dbReference type="KEGG" id="afl:Aflv_0110"/>
<dbReference type="eggNOG" id="COG0091">
    <property type="taxonomic scope" value="Bacteria"/>
</dbReference>
<dbReference type="HOGENOM" id="CLU_083987_3_3_9"/>
<dbReference type="Proteomes" id="UP000000742">
    <property type="component" value="Chromosome"/>
</dbReference>
<dbReference type="GO" id="GO:0022625">
    <property type="term" value="C:cytosolic large ribosomal subunit"/>
    <property type="evidence" value="ECO:0007669"/>
    <property type="project" value="TreeGrafter"/>
</dbReference>
<dbReference type="GO" id="GO:0019843">
    <property type="term" value="F:rRNA binding"/>
    <property type="evidence" value="ECO:0007669"/>
    <property type="project" value="UniProtKB-UniRule"/>
</dbReference>
<dbReference type="GO" id="GO:0003735">
    <property type="term" value="F:structural constituent of ribosome"/>
    <property type="evidence" value="ECO:0007669"/>
    <property type="project" value="InterPro"/>
</dbReference>
<dbReference type="GO" id="GO:0006412">
    <property type="term" value="P:translation"/>
    <property type="evidence" value="ECO:0007669"/>
    <property type="project" value="UniProtKB-UniRule"/>
</dbReference>
<dbReference type="CDD" id="cd00336">
    <property type="entry name" value="Ribosomal_L22"/>
    <property type="match status" value="1"/>
</dbReference>
<dbReference type="FunFam" id="3.90.470.10:FF:000001">
    <property type="entry name" value="50S ribosomal protein L22"/>
    <property type="match status" value="1"/>
</dbReference>
<dbReference type="Gene3D" id="3.90.470.10">
    <property type="entry name" value="Ribosomal protein L22/L17"/>
    <property type="match status" value="1"/>
</dbReference>
<dbReference type="HAMAP" id="MF_01331_B">
    <property type="entry name" value="Ribosomal_uL22_B"/>
    <property type="match status" value="1"/>
</dbReference>
<dbReference type="InterPro" id="IPR001063">
    <property type="entry name" value="Ribosomal_uL22"/>
</dbReference>
<dbReference type="InterPro" id="IPR005727">
    <property type="entry name" value="Ribosomal_uL22_bac/chlpt-type"/>
</dbReference>
<dbReference type="InterPro" id="IPR047867">
    <property type="entry name" value="Ribosomal_uL22_bac/org-type"/>
</dbReference>
<dbReference type="InterPro" id="IPR018260">
    <property type="entry name" value="Ribosomal_uL22_CS"/>
</dbReference>
<dbReference type="InterPro" id="IPR036394">
    <property type="entry name" value="Ribosomal_uL22_sf"/>
</dbReference>
<dbReference type="NCBIfam" id="TIGR01044">
    <property type="entry name" value="rplV_bact"/>
    <property type="match status" value="1"/>
</dbReference>
<dbReference type="PANTHER" id="PTHR13501">
    <property type="entry name" value="CHLOROPLAST 50S RIBOSOMAL PROTEIN L22-RELATED"/>
    <property type="match status" value="1"/>
</dbReference>
<dbReference type="PANTHER" id="PTHR13501:SF8">
    <property type="entry name" value="LARGE RIBOSOMAL SUBUNIT PROTEIN UL22M"/>
    <property type="match status" value="1"/>
</dbReference>
<dbReference type="Pfam" id="PF00237">
    <property type="entry name" value="Ribosomal_L22"/>
    <property type="match status" value="1"/>
</dbReference>
<dbReference type="SUPFAM" id="SSF54843">
    <property type="entry name" value="Ribosomal protein L22"/>
    <property type="match status" value="1"/>
</dbReference>
<dbReference type="PROSITE" id="PS00464">
    <property type="entry name" value="RIBOSOMAL_L22"/>
    <property type="match status" value="1"/>
</dbReference>
<feature type="chain" id="PRO_1000142225" description="Large ribosomal subunit protein uL22">
    <location>
        <begin position="1"/>
        <end position="113"/>
    </location>
</feature>
<sequence length="113" mass="12464">MQAKAVARTVRIAPRKARLVIDLIRGKQVSEAVAILRHTPKAASPIIEKVLKSAVANAEHNYDMDVNKLVVTEAYVNEGPTLKRFRPRAQGRASAINKRTSHITIVVSEKKEG</sequence>
<proteinExistence type="inferred from homology"/>
<protein>
    <recommendedName>
        <fullName evidence="1">Large ribosomal subunit protein uL22</fullName>
    </recommendedName>
    <alternativeName>
        <fullName evidence="2">50S ribosomal protein L22</fullName>
    </alternativeName>
</protein>
<keyword id="KW-0687">Ribonucleoprotein</keyword>
<keyword id="KW-0689">Ribosomal protein</keyword>
<keyword id="KW-0694">RNA-binding</keyword>
<keyword id="KW-0699">rRNA-binding</keyword>
<accession>B7GJ72</accession>
<reference key="1">
    <citation type="journal article" date="2008" name="Genome Biol.">
        <title>Encapsulated in silica: genome, proteome and physiology of the thermophilic bacterium Anoxybacillus flavithermus WK1.</title>
        <authorList>
            <person name="Saw J.H."/>
            <person name="Mountain B.W."/>
            <person name="Feng L."/>
            <person name="Omelchenko M.V."/>
            <person name="Hou S."/>
            <person name="Saito J.A."/>
            <person name="Stott M.B."/>
            <person name="Li D."/>
            <person name="Zhao G."/>
            <person name="Wu J."/>
            <person name="Galperin M.Y."/>
            <person name="Koonin E.V."/>
            <person name="Makarova K.S."/>
            <person name="Wolf Y.I."/>
            <person name="Rigden D.J."/>
            <person name="Dunfield P.F."/>
            <person name="Wang L."/>
            <person name="Alam M."/>
        </authorList>
    </citation>
    <scope>NUCLEOTIDE SEQUENCE [LARGE SCALE GENOMIC DNA]</scope>
    <source>
        <strain>DSM 21510 / WK1</strain>
    </source>
</reference>
<organism>
    <name type="scientific">Anoxybacillus flavithermus (strain DSM 21510 / WK1)</name>
    <dbReference type="NCBI Taxonomy" id="491915"/>
    <lineage>
        <taxon>Bacteria</taxon>
        <taxon>Bacillati</taxon>
        <taxon>Bacillota</taxon>
        <taxon>Bacilli</taxon>
        <taxon>Bacillales</taxon>
        <taxon>Anoxybacillaceae</taxon>
        <taxon>Anoxybacillus</taxon>
    </lineage>
</organism>
<name>RL22_ANOFW</name>
<evidence type="ECO:0000255" key="1">
    <source>
        <dbReference type="HAMAP-Rule" id="MF_01331"/>
    </source>
</evidence>
<evidence type="ECO:0000305" key="2"/>
<gene>
    <name evidence="1" type="primary">rplV</name>
    <name type="ordered locus">Aflv_0110</name>
</gene>